<comment type="function">
    <text evidence="1">Catalyzes the NADPH-dependent reduction of N-acetyl-5-glutamyl phosphate to yield N-acetyl-L-glutamate 5-semialdehyde.</text>
</comment>
<comment type="catalytic activity">
    <reaction evidence="1">
        <text>N-acetyl-L-glutamate 5-semialdehyde + phosphate + NADP(+) = N-acetyl-L-glutamyl 5-phosphate + NADPH + H(+)</text>
        <dbReference type="Rhea" id="RHEA:21588"/>
        <dbReference type="ChEBI" id="CHEBI:15378"/>
        <dbReference type="ChEBI" id="CHEBI:29123"/>
        <dbReference type="ChEBI" id="CHEBI:43474"/>
        <dbReference type="ChEBI" id="CHEBI:57783"/>
        <dbReference type="ChEBI" id="CHEBI:57936"/>
        <dbReference type="ChEBI" id="CHEBI:58349"/>
        <dbReference type="EC" id="1.2.1.38"/>
    </reaction>
</comment>
<comment type="pathway">
    <text evidence="1">Amino-acid biosynthesis; L-arginine biosynthesis; N(2)-acetyl-L-ornithine from L-glutamate: step 3/4.</text>
</comment>
<comment type="subcellular location">
    <subcellularLocation>
        <location evidence="1">Cytoplasm</location>
    </subcellularLocation>
</comment>
<comment type="similarity">
    <text evidence="1">Belongs to the NAGSA dehydrogenase family. Type 1 subfamily.</text>
</comment>
<gene>
    <name evidence="1" type="primary">argC</name>
    <name type="ordered locus">Msp_0552</name>
</gene>
<evidence type="ECO:0000255" key="1">
    <source>
        <dbReference type="HAMAP-Rule" id="MF_00150"/>
    </source>
</evidence>
<keyword id="KW-0028">Amino-acid biosynthesis</keyword>
<keyword id="KW-0055">Arginine biosynthesis</keyword>
<keyword id="KW-0963">Cytoplasm</keyword>
<keyword id="KW-0521">NADP</keyword>
<keyword id="KW-0560">Oxidoreductase</keyword>
<keyword id="KW-1185">Reference proteome</keyword>
<protein>
    <recommendedName>
        <fullName evidence="1">N-acetyl-gamma-glutamyl-phosphate reductase</fullName>
        <shortName evidence="1">AGPR</shortName>
        <ecNumber evidence="1">1.2.1.38</ecNumber>
    </recommendedName>
    <alternativeName>
        <fullName evidence="1">N-acetyl-glutamate semialdehyde dehydrogenase</fullName>
        <shortName evidence="1">NAGSA dehydrogenase</shortName>
    </alternativeName>
</protein>
<organism>
    <name type="scientific">Methanosphaera stadtmanae (strain ATCC 43021 / DSM 3091 / JCM 11832 / MCB-3)</name>
    <dbReference type="NCBI Taxonomy" id="339860"/>
    <lineage>
        <taxon>Archaea</taxon>
        <taxon>Methanobacteriati</taxon>
        <taxon>Methanobacteriota</taxon>
        <taxon>Methanomada group</taxon>
        <taxon>Methanobacteria</taxon>
        <taxon>Methanobacteriales</taxon>
        <taxon>Methanobacteriaceae</taxon>
        <taxon>Methanosphaera</taxon>
    </lineage>
</organism>
<name>ARGC_METST</name>
<sequence>MSKIDVAIIGASGYTGGELVRLLTRHPRVNISTVTSRKNNGEDLSSLHPNLQDLDLKFTNPDTKDIDADVVFSALPHGVSMKLVPEYLDNGARVIDLSGDFRFSDVSVYEKWYGMKHEHPDLKAVFGLPEINRDKIKDATLIANPGCFPTGAILSSLPIVENKLVDRIILDSKSGVSGAGISPNNNTHYPTCADNIKPYAIANHRHTPEIREQLRNFGTGTVKVSFTPHLVPVIRGIITTNHSFLLKNDVSASDVHDLYMDYYKNEPFVKVLKDNNIPLLASVRGSNYCQIGGISLDDEDELVVVSAIDNLVKGASGQAIQNMNIMFGFDETEGLKELGLYP</sequence>
<reference key="1">
    <citation type="journal article" date="2006" name="J. Bacteriol.">
        <title>The genome sequence of Methanosphaera stadtmanae reveals why this human intestinal archaeon is restricted to methanol and H2 for methane formation and ATP synthesis.</title>
        <authorList>
            <person name="Fricke W.F."/>
            <person name="Seedorf H."/>
            <person name="Henne A."/>
            <person name="Kruer M."/>
            <person name="Liesegang H."/>
            <person name="Hedderich R."/>
            <person name="Gottschalk G."/>
            <person name="Thauer R.K."/>
        </authorList>
    </citation>
    <scope>NUCLEOTIDE SEQUENCE [LARGE SCALE GENOMIC DNA]</scope>
    <source>
        <strain>ATCC 43021 / DSM 3091 / JCM 11832 / MCB-3</strain>
    </source>
</reference>
<accession>Q2NGV2</accession>
<proteinExistence type="inferred from homology"/>
<feature type="chain" id="PRO_1000011016" description="N-acetyl-gamma-glutamyl-phosphate reductase">
    <location>
        <begin position="1"/>
        <end position="342"/>
    </location>
</feature>
<feature type="active site" evidence="1">
    <location>
        <position position="147"/>
    </location>
</feature>
<dbReference type="EC" id="1.2.1.38" evidence="1"/>
<dbReference type="EMBL" id="CP000102">
    <property type="protein sequence ID" value="ABC56951.1"/>
    <property type="molecule type" value="Genomic_DNA"/>
</dbReference>
<dbReference type="RefSeq" id="WP_011406151.1">
    <property type="nucleotide sequence ID" value="NC_007681.1"/>
</dbReference>
<dbReference type="SMR" id="Q2NGV2"/>
<dbReference type="STRING" id="339860.Msp_0552"/>
<dbReference type="GeneID" id="41325126"/>
<dbReference type="KEGG" id="mst:Msp_0552"/>
<dbReference type="eggNOG" id="arCOG00495">
    <property type="taxonomic scope" value="Archaea"/>
</dbReference>
<dbReference type="HOGENOM" id="CLU_006384_0_1_2"/>
<dbReference type="OrthoDB" id="372053at2157"/>
<dbReference type="UniPathway" id="UPA00068">
    <property type="reaction ID" value="UER00108"/>
</dbReference>
<dbReference type="Proteomes" id="UP000001931">
    <property type="component" value="Chromosome"/>
</dbReference>
<dbReference type="GO" id="GO:0005737">
    <property type="term" value="C:cytoplasm"/>
    <property type="evidence" value="ECO:0007669"/>
    <property type="project" value="UniProtKB-SubCell"/>
</dbReference>
<dbReference type="GO" id="GO:0003942">
    <property type="term" value="F:N-acetyl-gamma-glutamyl-phosphate reductase activity"/>
    <property type="evidence" value="ECO:0007669"/>
    <property type="project" value="UniProtKB-UniRule"/>
</dbReference>
<dbReference type="GO" id="GO:0051287">
    <property type="term" value="F:NAD binding"/>
    <property type="evidence" value="ECO:0007669"/>
    <property type="project" value="InterPro"/>
</dbReference>
<dbReference type="GO" id="GO:0070401">
    <property type="term" value="F:NADP+ binding"/>
    <property type="evidence" value="ECO:0007669"/>
    <property type="project" value="InterPro"/>
</dbReference>
<dbReference type="GO" id="GO:0006526">
    <property type="term" value="P:L-arginine biosynthetic process"/>
    <property type="evidence" value="ECO:0007669"/>
    <property type="project" value="UniProtKB-UniRule"/>
</dbReference>
<dbReference type="CDD" id="cd23934">
    <property type="entry name" value="AGPR_1_C"/>
    <property type="match status" value="1"/>
</dbReference>
<dbReference type="CDD" id="cd17895">
    <property type="entry name" value="AGPR_1_N"/>
    <property type="match status" value="1"/>
</dbReference>
<dbReference type="FunFam" id="3.30.360.10:FF:000014">
    <property type="entry name" value="N-acetyl-gamma-glutamyl-phosphate reductase"/>
    <property type="match status" value="1"/>
</dbReference>
<dbReference type="Gene3D" id="3.30.360.10">
    <property type="entry name" value="Dihydrodipicolinate Reductase, domain 2"/>
    <property type="match status" value="1"/>
</dbReference>
<dbReference type="Gene3D" id="3.40.50.720">
    <property type="entry name" value="NAD(P)-binding Rossmann-like Domain"/>
    <property type="match status" value="1"/>
</dbReference>
<dbReference type="HAMAP" id="MF_00150">
    <property type="entry name" value="ArgC_type1"/>
    <property type="match status" value="1"/>
</dbReference>
<dbReference type="InterPro" id="IPR000706">
    <property type="entry name" value="AGPR_type-1"/>
</dbReference>
<dbReference type="InterPro" id="IPR036291">
    <property type="entry name" value="NAD(P)-bd_dom_sf"/>
</dbReference>
<dbReference type="InterPro" id="IPR050085">
    <property type="entry name" value="NAGSA_dehydrogenase"/>
</dbReference>
<dbReference type="InterPro" id="IPR000534">
    <property type="entry name" value="Semialdehyde_DH_NAD-bd"/>
</dbReference>
<dbReference type="NCBIfam" id="TIGR01850">
    <property type="entry name" value="argC"/>
    <property type="match status" value="1"/>
</dbReference>
<dbReference type="PANTHER" id="PTHR32338:SF10">
    <property type="entry name" value="N-ACETYL-GAMMA-GLUTAMYL-PHOSPHATE REDUCTASE, CHLOROPLASTIC-RELATED"/>
    <property type="match status" value="1"/>
</dbReference>
<dbReference type="PANTHER" id="PTHR32338">
    <property type="entry name" value="N-ACETYL-GAMMA-GLUTAMYL-PHOSPHATE REDUCTASE, CHLOROPLASTIC-RELATED-RELATED"/>
    <property type="match status" value="1"/>
</dbReference>
<dbReference type="Pfam" id="PF01118">
    <property type="entry name" value="Semialdhyde_dh"/>
    <property type="match status" value="1"/>
</dbReference>
<dbReference type="Pfam" id="PF22698">
    <property type="entry name" value="Semialdhyde_dhC_1"/>
    <property type="match status" value="1"/>
</dbReference>
<dbReference type="SMART" id="SM00859">
    <property type="entry name" value="Semialdhyde_dh"/>
    <property type="match status" value="1"/>
</dbReference>
<dbReference type="SUPFAM" id="SSF55347">
    <property type="entry name" value="Glyceraldehyde-3-phosphate dehydrogenase-like, C-terminal domain"/>
    <property type="match status" value="1"/>
</dbReference>
<dbReference type="SUPFAM" id="SSF51735">
    <property type="entry name" value="NAD(P)-binding Rossmann-fold domains"/>
    <property type="match status" value="1"/>
</dbReference>